<proteinExistence type="inferred from homology"/>
<accession>B8CM27</accession>
<organism>
    <name type="scientific">Shewanella piezotolerans (strain WP3 / JCM 13877)</name>
    <dbReference type="NCBI Taxonomy" id="225849"/>
    <lineage>
        <taxon>Bacteria</taxon>
        <taxon>Pseudomonadati</taxon>
        <taxon>Pseudomonadota</taxon>
        <taxon>Gammaproteobacteria</taxon>
        <taxon>Alteromonadales</taxon>
        <taxon>Shewanellaceae</taxon>
        <taxon>Shewanella</taxon>
    </lineage>
</organism>
<reference key="1">
    <citation type="journal article" date="2008" name="PLoS ONE">
        <title>Environmental adaptation: genomic analysis of the piezotolerant and psychrotolerant deep-sea iron reducing bacterium Shewanella piezotolerans WP3.</title>
        <authorList>
            <person name="Wang F."/>
            <person name="Wang J."/>
            <person name="Jian H."/>
            <person name="Zhang B."/>
            <person name="Li S."/>
            <person name="Wang F."/>
            <person name="Zeng X."/>
            <person name="Gao L."/>
            <person name="Bartlett D.H."/>
            <person name="Yu J."/>
            <person name="Hu S."/>
            <person name="Xiao X."/>
        </authorList>
    </citation>
    <scope>NUCLEOTIDE SEQUENCE [LARGE SCALE GENOMIC DNA]</scope>
    <source>
        <strain>WP3 / JCM 13877</strain>
    </source>
</reference>
<evidence type="ECO:0000255" key="1">
    <source>
        <dbReference type="HAMAP-Rule" id="MF_00116"/>
    </source>
</evidence>
<dbReference type="EC" id="3.6.1.23" evidence="1"/>
<dbReference type="EMBL" id="CP000472">
    <property type="protein sequence ID" value="ACJ28951.1"/>
    <property type="molecule type" value="Genomic_DNA"/>
</dbReference>
<dbReference type="RefSeq" id="WP_020912313.1">
    <property type="nucleotide sequence ID" value="NC_011566.1"/>
</dbReference>
<dbReference type="SMR" id="B8CM27"/>
<dbReference type="STRING" id="225849.swp_2201"/>
<dbReference type="KEGG" id="swp:swp_2201"/>
<dbReference type="eggNOG" id="COG0756">
    <property type="taxonomic scope" value="Bacteria"/>
</dbReference>
<dbReference type="HOGENOM" id="CLU_068508_1_1_6"/>
<dbReference type="OrthoDB" id="9809956at2"/>
<dbReference type="UniPathway" id="UPA00610">
    <property type="reaction ID" value="UER00666"/>
</dbReference>
<dbReference type="Proteomes" id="UP000000753">
    <property type="component" value="Chromosome"/>
</dbReference>
<dbReference type="GO" id="GO:0004170">
    <property type="term" value="F:dUTP diphosphatase activity"/>
    <property type="evidence" value="ECO:0007669"/>
    <property type="project" value="UniProtKB-UniRule"/>
</dbReference>
<dbReference type="GO" id="GO:0000287">
    <property type="term" value="F:magnesium ion binding"/>
    <property type="evidence" value="ECO:0007669"/>
    <property type="project" value="UniProtKB-UniRule"/>
</dbReference>
<dbReference type="GO" id="GO:0006226">
    <property type="term" value="P:dUMP biosynthetic process"/>
    <property type="evidence" value="ECO:0007669"/>
    <property type="project" value="UniProtKB-UniRule"/>
</dbReference>
<dbReference type="GO" id="GO:0046081">
    <property type="term" value="P:dUTP catabolic process"/>
    <property type="evidence" value="ECO:0007669"/>
    <property type="project" value="InterPro"/>
</dbReference>
<dbReference type="CDD" id="cd07557">
    <property type="entry name" value="trimeric_dUTPase"/>
    <property type="match status" value="1"/>
</dbReference>
<dbReference type="FunFam" id="2.70.40.10:FF:000002">
    <property type="entry name" value="dUTP diphosphatase"/>
    <property type="match status" value="1"/>
</dbReference>
<dbReference type="Gene3D" id="2.70.40.10">
    <property type="match status" value="1"/>
</dbReference>
<dbReference type="HAMAP" id="MF_00116">
    <property type="entry name" value="dUTPase_bact"/>
    <property type="match status" value="1"/>
</dbReference>
<dbReference type="InterPro" id="IPR008181">
    <property type="entry name" value="dUTPase"/>
</dbReference>
<dbReference type="InterPro" id="IPR029054">
    <property type="entry name" value="dUTPase-like"/>
</dbReference>
<dbReference type="InterPro" id="IPR036157">
    <property type="entry name" value="dUTPase-like_sf"/>
</dbReference>
<dbReference type="InterPro" id="IPR033704">
    <property type="entry name" value="dUTPase_trimeric"/>
</dbReference>
<dbReference type="NCBIfam" id="TIGR00576">
    <property type="entry name" value="dut"/>
    <property type="match status" value="1"/>
</dbReference>
<dbReference type="NCBIfam" id="NF001862">
    <property type="entry name" value="PRK00601.1"/>
    <property type="match status" value="1"/>
</dbReference>
<dbReference type="PANTHER" id="PTHR11241">
    <property type="entry name" value="DEOXYURIDINE 5'-TRIPHOSPHATE NUCLEOTIDOHYDROLASE"/>
    <property type="match status" value="1"/>
</dbReference>
<dbReference type="PANTHER" id="PTHR11241:SF0">
    <property type="entry name" value="DEOXYURIDINE 5'-TRIPHOSPHATE NUCLEOTIDOHYDROLASE"/>
    <property type="match status" value="1"/>
</dbReference>
<dbReference type="Pfam" id="PF00692">
    <property type="entry name" value="dUTPase"/>
    <property type="match status" value="1"/>
</dbReference>
<dbReference type="SUPFAM" id="SSF51283">
    <property type="entry name" value="dUTPase-like"/>
    <property type="match status" value="1"/>
</dbReference>
<feature type="chain" id="PRO_1000117573" description="Deoxyuridine 5'-triphosphate nucleotidohydrolase">
    <location>
        <begin position="1"/>
        <end position="152"/>
    </location>
</feature>
<feature type="binding site" evidence="1">
    <location>
        <begin position="71"/>
        <end position="73"/>
    </location>
    <ligand>
        <name>substrate</name>
    </ligand>
</feature>
<feature type="binding site" evidence="1">
    <location>
        <position position="84"/>
    </location>
    <ligand>
        <name>substrate</name>
    </ligand>
</feature>
<feature type="binding site" evidence="1">
    <location>
        <begin position="88"/>
        <end position="90"/>
    </location>
    <ligand>
        <name>substrate</name>
    </ligand>
</feature>
<feature type="binding site" evidence="1">
    <location>
        <position position="98"/>
    </location>
    <ligand>
        <name>substrate</name>
    </ligand>
</feature>
<sequence>MKTPIELKILDSRIGTQFPLPAYATLGSAGMDLRAITDIALTIQPGETVLIPTGIAVHVADPSLAAIILPRSGLGHKHGIVLGNLVGLIDSDYQGPLMVSCWNRGSEPFTIEIGDRLAQLVFVPVVQAEFKLVDEFDSSDRGAGGFGHSGTK</sequence>
<name>DUT_SHEPW</name>
<protein>
    <recommendedName>
        <fullName evidence="1">Deoxyuridine 5'-triphosphate nucleotidohydrolase</fullName>
        <shortName evidence="1">dUTPase</shortName>
        <ecNumber evidence="1">3.6.1.23</ecNumber>
    </recommendedName>
    <alternativeName>
        <fullName evidence="1">dUTP pyrophosphatase</fullName>
    </alternativeName>
</protein>
<keyword id="KW-0378">Hydrolase</keyword>
<keyword id="KW-0460">Magnesium</keyword>
<keyword id="KW-0479">Metal-binding</keyword>
<keyword id="KW-0546">Nucleotide metabolism</keyword>
<comment type="function">
    <text evidence="1">This enzyme is involved in nucleotide metabolism: it produces dUMP, the immediate precursor of thymidine nucleotides and it decreases the intracellular concentration of dUTP so that uracil cannot be incorporated into DNA.</text>
</comment>
<comment type="catalytic activity">
    <reaction evidence="1">
        <text>dUTP + H2O = dUMP + diphosphate + H(+)</text>
        <dbReference type="Rhea" id="RHEA:10248"/>
        <dbReference type="ChEBI" id="CHEBI:15377"/>
        <dbReference type="ChEBI" id="CHEBI:15378"/>
        <dbReference type="ChEBI" id="CHEBI:33019"/>
        <dbReference type="ChEBI" id="CHEBI:61555"/>
        <dbReference type="ChEBI" id="CHEBI:246422"/>
        <dbReference type="EC" id="3.6.1.23"/>
    </reaction>
</comment>
<comment type="cofactor">
    <cofactor evidence="1">
        <name>Mg(2+)</name>
        <dbReference type="ChEBI" id="CHEBI:18420"/>
    </cofactor>
</comment>
<comment type="pathway">
    <text evidence="1">Pyrimidine metabolism; dUMP biosynthesis; dUMP from dCTP (dUTP route): step 2/2.</text>
</comment>
<comment type="similarity">
    <text evidence="1">Belongs to the dUTPase family.</text>
</comment>
<gene>
    <name evidence="1" type="primary">dut</name>
    <name type="ordered locus">swp_2201</name>
</gene>